<proteinExistence type="evidence at protein level"/>
<name>RB39B_HUMAN</name>
<protein>
    <recommendedName>
        <fullName>Ras-related protein Rab-39B</fullName>
        <ecNumber evidence="2">3.6.5.2</ecNumber>
    </recommendedName>
</protein>
<gene>
    <name evidence="18" type="primary">RAB39B</name>
</gene>
<evidence type="ECO:0000250" key="1">
    <source>
        <dbReference type="UniProtKB" id="P20336"/>
    </source>
</evidence>
<evidence type="ECO:0000250" key="2">
    <source>
        <dbReference type="UniProtKB" id="P62820"/>
    </source>
</evidence>
<evidence type="ECO:0000250" key="3">
    <source>
        <dbReference type="UniProtKB" id="Q8BHC1"/>
    </source>
</evidence>
<evidence type="ECO:0000255" key="4">
    <source>
        <dbReference type="PROSITE-ProRule" id="PRU00753"/>
    </source>
</evidence>
<evidence type="ECO:0000269" key="5">
    <source>
    </source>
</evidence>
<evidence type="ECO:0000269" key="6">
    <source>
    </source>
</evidence>
<evidence type="ECO:0000269" key="7">
    <source>
    </source>
</evidence>
<evidence type="ECO:0000269" key="8">
    <source>
    </source>
</evidence>
<evidence type="ECO:0000269" key="9">
    <source>
    </source>
</evidence>
<evidence type="ECO:0000269" key="10">
    <source>
    </source>
</evidence>
<evidence type="ECO:0000269" key="11">
    <source>
    </source>
</evidence>
<evidence type="ECO:0000269" key="12">
    <source>
    </source>
</evidence>
<evidence type="ECO:0000269" key="13">
    <source>
    </source>
</evidence>
<evidence type="ECO:0000269" key="14">
    <source>
    </source>
</evidence>
<evidence type="ECO:0000269" key="15">
    <source ref="13"/>
</evidence>
<evidence type="ECO:0000305" key="16"/>
<evidence type="ECO:0000305" key="17">
    <source ref="13"/>
</evidence>
<evidence type="ECO:0000312" key="18">
    <source>
        <dbReference type="HGNC" id="HGNC:16499"/>
    </source>
</evidence>
<evidence type="ECO:0007744" key="19">
    <source>
        <dbReference type="PDB" id="6S5F"/>
    </source>
</evidence>
<evidence type="ECO:0007829" key="20">
    <source>
        <dbReference type="PDB" id="6S5F"/>
    </source>
</evidence>
<reference key="1">
    <citation type="journal article" date="2002" name="Cytogenet. Genome Res.">
        <title>Isolation and characterization of a human novel RAB (RAB39B) gene.</title>
        <authorList>
            <person name="Cheng H."/>
            <person name="Ma Y."/>
            <person name="Ni X."/>
            <person name="Jiang M."/>
            <person name="Guo L."/>
            <person name="Ying K."/>
            <person name="Xie Y."/>
            <person name="Mao Y."/>
        </authorList>
    </citation>
    <scope>NUCLEOTIDE SEQUENCE [MRNA]</scope>
    <source>
        <tissue>Fetal brain</tissue>
    </source>
</reference>
<reference key="2">
    <citation type="journal article" date="2007" name="BMC Genomics">
        <title>The full-ORF clone resource of the German cDNA consortium.</title>
        <authorList>
            <person name="Bechtel S."/>
            <person name="Rosenfelder H."/>
            <person name="Duda A."/>
            <person name="Schmidt C.P."/>
            <person name="Ernst U."/>
            <person name="Wellenreuther R."/>
            <person name="Mehrle A."/>
            <person name="Schuster C."/>
            <person name="Bahr A."/>
            <person name="Bloecker H."/>
            <person name="Heubner D."/>
            <person name="Hoerlein A."/>
            <person name="Michel G."/>
            <person name="Wedler H."/>
            <person name="Koehrer K."/>
            <person name="Ottenwaelder B."/>
            <person name="Poustka A."/>
            <person name="Wiemann S."/>
            <person name="Schupp I."/>
        </authorList>
    </citation>
    <scope>NUCLEOTIDE SEQUENCE [LARGE SCALE MRNA]</scope>
    <source>
        <tissue>Brain</tissue>
    </source>
</reference>
<reference key="3">
    <citation type="journal article" date="2005" name="Nature">
        <title>The DNA sequence of the human X chromosome.</title>
        <authorList>
            <person name="Ross M.T."/>
            <person name="Grafham D.V."/>
            <person name="Coffey A.J."/>
            <person name="Scherer S."/>
            <person name="McLay K."/>
            <person name="Muzny D."/>
            <person name="Platzer M."/>
            <person name="Howell G.R."/>
            <person name="Burrows C."/>
            <person name="Bird C.P."/>
            <person name="Frankish A."/>
            <person name="Lovell F.L."/>
            <person name="Howe K.L."/>
            <person name="Ashurst J.L."/>
            <person name="Fulton R.S."/>
            <person name="Sudbrak R."/>
            <person name="Wen G."/>
            <person name="Jones M.C."/>
            <person name="Hurles M.E."/>
            <person name="Andrews T.D."/>
            <person name="Scott C.E."/>
            <person name="Searle S."/>
            <person name="Ramser J."/>
            <person name="Whittaker A."/>
            <person name="Deadman R."/>
            <person name="Carter N.P."/>
            <person name="Hunt S.E."/>
            <person name="Chen R."/>
            <person name="Cree A."/>
            <person name="Gunaratne P."/>
            <person name="Havlak P."/>
            <person name="Hodgson A."/>
            <person name="Metzker M.L."/>
            <person name="Richards S."/>
            <person name="Scott G."/>
            <person name="Steffen D."/>
            <person name="Sodergren E."/>
            <person name="Wheeler D.A."/>
            <person name="Worley K.C."/>
            <person name="Ainscough R."/>
            <person name="Ambrose K.D."/>
            <person name="Ansari-Lari M.A."/>
            <person name="Aradhya S."/>
            <person name="Ashwell R.I."/>
            <person name="Babbage A.K."/>
            <person name="Bagguley C.L."/>
            <person name="Ballabio A."/>
            <person name="Banerjee R."/>
            <person name="Barker G.E."/>
            <person name="Barlow K.F."/>
            <person name="Barrett I.P."/>
            <person name="Bates K.N."/>
            <person name="Beare D.M."/>
            <person name="Beasley H."/>
            <person name="Beasley O."/>
            <person name="Beck A."/>
            <person name="Bethel G."/>
            <person name="Blechschmidt K."/>
            <person name="Brady N."/>
            <person name="Bray-Allen S."/>
            <person name="Bridgeman A.M."/>
            <person name="Brown A.J."/>
            <person name="Brown M.J."/>
            <person name="Bonnin D."/>
            <person name="Bruford E.A."/>
            <person name="Buhay C."/>
            <person name="Burch P."/>
            <person name="Burford D."/>
            <person name="Burgess J."/>
            <person name="Burrill W."/>
            <person name="Burton J."/>
            <person name="Bye J.M."/>
            <person name="Carder C."/>
            <person name="Carrel L."/>
            <person name="Chako J."/>
            <person name="Chapman J.C."/>
            <person name="Chavez D."/>
            <person name="Chen E."/>
            <person name="Chen G."/>
            <person name="Chen Y."/>
            <person name="Chen Z."/>
            <person name="Chinault C."/>
            <person name="Ciccodicola A."/>
            <person name="Clark S.Y."/>
            <person name="Clarke G."/>
            <person name="Clee C.M."/>
            <person name="Clegg S."/>
            <person name="Clerc-Blankenburg K."/>
            <person name="Clifford K."/>
            <person name="Cobley V."/>
            <person name="Cole C.G."/>
            <person name="Conquer J.S."/>
            <person name="Corby N."/>
            <person name="Connor R.E."/>
            <person name="David R."/>
            <person name="Davies J."/>
            <person name="Davis C."/>
            <person name="Davis J."/>
            <person name="Delgado O."/>
            <person name="Deshazo D."/>
            <person name="Dhami P."/>
            <person name="Ding Y."/>
            <person name="Dinh H."/>
            <person name="Dodsworth S."/>
            <person name="Draper H."/>
            <person name="Dugan-Rocha S."/>
            <person name="Dunham A."/>
            <person name="Dunn M."/>
            <person name="Durbin K.J."/>
            <person name="Dutta I."/>
            <person name="Eades T."/>
            <person name="Ellwood M."/>
            <person name="Emery-Cohen A."/>
            <person name="Errington H."/>
            <person name="Evans K.L."/>
            <person name="Faulkner L."/>
            <person name="Francis F."/>
            <person name="Frankland J."/>
            <person name="Fraser A.E."/>
            <person name="Galgoczy P."/>
            <person name="Gilbert J."/>
            <person name="Gill R."/>
            <person name="Gloeckner G."/>
            <person name="Gregory S.G."/>
            <person name="Gribble S."/>
            <person name="Griffiths C."/>
            <person name="Grocock R."/>
            <person name="Gu Y."/>
            <person name="Gwilliam R."/>
            <person name="Hamilton C."/>
            <person name="Hart E.A."/>
            <person name="Hawes A."/>
            <person name="Heath P.D."/>
            <person name="Heitmann K."/>
            <person name="Hennig S."/>
            <person name="Hernandez J."/>
            <person name="Hinzmann B."/>
            <person name="Ho S."/>
            <person name="Hoffs M."/>
            <person name="Howden P.J."/>
            <person name="Huckle E.J."/>
            <person name="Hume J."/>
            <person name="Hunt P.J."/>
            <person name="Hunt A.R."/>
            <person name="Isherwood J."/>
            <person name="Jacob L."/>
            <person name="Johnson D."/>
            <person name="Jones S."/>
            <person name="de Jong P.J."/>
            <person name="Joseph S.S."/>
            <person name="Keenan S."/>
            <person name="Kelly S."/>
            <person name="Kershaw J.K."/>
            <person name="Khan Z."/>
            <person name="Kioschis P."/>
            <person name="Klages S."/>
            <person name="Knights A.J."/>
            <person name="Kosiura A."/>
            <person name="Kovar-Smith C."/>
            <person name="Laird G.K."/>
            <person name="Langford C."/>
            <person name="Lawlor S."/>
            <person name="Leversha M."/>
            <person name="Lewis L."/>
            <person name="Liu W."/>
            <person name="Lloyd C."/>
            <person name="Lloyd D.M."/>
            <person name="Loulseged H."/>
            <person name="Loveland J.E."/>
            <person name="Lovell J.D."/>
            <person name="Lozado R."/>
            <person name="Lu J."/>
            <person name="Lyne R."/>
            <person name="Ma J."/>
            <person name="Maheshwari M."/>
            <person name="Matthews L.H."/>
            <person name="McDowall J."/>
            <person name="McLaren S."/>
            <person name="McMurray A."/>
            <person name="Meidl P."/>
            <person name="Meitinger T."/>
            <person name="Milne S."/>
            <person name="Miner G."/>
            <person name="Mistry S.L."/>
            <person name="Morgan M."/>
            <person name="Morris S."/>
            <person name="Mueller I."/>
            <person name="Mullikin J.C."/>
            <person name="Nguyen N."/>
            <person name="Nordsiek G."/>
            <person name="Nyakatura G."/>
            <person name="O'dell C.N."/>
            <person name="Okwuonu G."/>
            <person name="Palmer S."/>
            <person name="Pandian R."/>
            <person name="Parker D."/>
            <person name="Parrish J."/>
            <person name="Pasternak S."/>
            <person name="Patel D."/>
            <person name="Pearce A.V."/>
            <person name="Pearson D.M."/>
            <person name="Pelan S.E."/>
            <person name="Perez L."/>
            <person name="Porter K.M."/>
            <person name="Ramsey Y."/>
            <person name="Reichwald K."/>
            <person name="Rhodes S."/>
            <person name="Ridler K.A."/>
            <person name="Schlessinger D."/>
            <person name="Schueler M.G."/>
            <person name="Sehra H.K."/>
            <person name="Shaw-Smith C."/>
            <person name="Shen H."/>
            <person name="Sheridan E.M."/>
            <person name="Shownkeen R."/>
            <person name="Skuce C.D."/>
            <person name="Smith M.L."/>
            <person name="Sotheran E.C."/>
            <person name="Steingruber H.E."/>
            <person name="Steward C.A."/>
            <person name="Storey R."/>
            <person name="Swann R.M."/>
            <person name="Swarbreck D."/>
            <person name="Tabor P.E."/>
            <person name="Taudien S."/>
            <person name="Taylor T."/>
            <person name="Teague B."/>
            <person name="Thomas K."/>
            <person name="Thorpe A."/>
            <person name="Timms K."/>
            <person name="Tracey A."/>
            <person name="Trevanion S."/>
            <person name="Tromans A.C."/>
            <person name="d'Urso M."/>
            <person name="Verduzco D."/>
            <person name="Villasana D."/>
            <person name="Waldron L."/>
            <person name="Wall M."/>
            <person name="Wang Q."/>
            <person name="Warren J."/>
            <person name="Warry G.L."/>
            <person name="Wei X."/>
            <person name="West A."/>
            <person name="Whitehead S.L."/>
            <person name="Whiteley M.N."/>
            <person name="Wilkinson J.E."/>
            <person name="Willey D.L."/>
            <person name="Williams G."/>
            <person name="Williams L."/>
            <person name="Williamson A."/>
            <person name="Williamson H."/>
            <person name="Wilming L."/>
            <person name="Woodmansey R.L."/>
            <person name="Wray P.W."/>
            <person name="Yen J."/>
            <person name="Zhang J."/>
            <person name="Zhou J."/>
            <person name="Zoghbi H."/>
            <person name="Zorilla S."/>
            <person name="Buck D."/>
            <person name="Reinhardt R."/>
            <person name="Poustka A."/>
            <person name="Rosenthal A."/>
            <person name="Lehrach H."/>
            <person name="Meindl A."/>
            <person name="Minx P.J."/>
            <person name="Hillier L.W."/>
            <person name="Willard H.F."/>
            <person name="Wilson R.K."/>
            <person name="Waterston R.H."/>
            <person name="Rice C.M."/>
            <person name="Vaudin M."/>
            <person name="Coulson A."/>
            <person name="Nelson D.L."/>
            <person name="Weinstock G."/>
            <person name="Sulston J.E."/>
            <person name="Durbin R.M."/>
            <person name="Hubbard T."/>
            <person name="Gibbs R.A."/>
            <person name="Beck S."/>
            <person name="Rogers J."/>
            <person name="Bentley D.R."/>
        </authorList>
    </citation>
    <scope>NUCLEOTIDE SEQUENCE [LARGE SCALE GENOMIC DNA]</scope>
</reference>
<reference key="4">
    <citation type="journal article" date="2004" name="Genome Res.">
        <title>The status, quality, and expansion of the NIH full-length cDNA project: the Mammalian Gene Collection (MGC).</title>
        <authorList>
            <consortium name="The MGC Project Team"/>
        </authorList>
    </citation>
    <scope>NUCLEOTIDE SEQUENCE [LARGE SCALE MRNA]</scope>
    <source>
        <tissue>Pancreas</tissue>
    </source>
</reference>
<reference key="5">
    <citation type="journal article" date="2010" name="Am. J. Hum. Genet.">
        <title>Mutations in the small GTPase gene RAB39B are responsible for X-linked mental retardation associated with autism, epilepsy, and macrocephaly.</title>
        <authorList>
            <person name="Giannandrea M."/>
            <person name="Bianchi V."/>
            <person name="Mignogna M.L."/>
            <person name="Sirri A."/>
            <person name="Carrabino S."/>
            <person name="D'Elia E."/>
            <person name="Vecellio M."/>
            <person name="Russo S."/>
            <person name="Cogliati F."/>
            <person name="Larizza L."/>
            <person name="Ropers H.H."/>
            <person name="Tzschach A."/>
            <person name="Kalscheuer V."/>
            <person name="Oehl-Jaschkowitz B."/>
            <person name="Skinner C."/>
            <person name="Schwartz C.E."/>
            <person name="Gecz J."/>
            <person name="Van Esch H."/>
            <person name="Raynaud M."/>
            <person name="Chelly J."/>
            <person name="de Brouwer A.P."/>
            <person name="Toniolo D."/>
            <person name="D'Adamo P."/>
        </authorList>
    </citation>
    <scope>SUBCELLULAR LOCATION</scope>
    <scope>TISSUE SPECIFICITY</scope>
    <scope>INVOLVEMENT IN XLID72</scope>
</reference>
<reference key="6">
    <citation type="journal article" date="2013" name="PLoS ONE">
        <title>Rab39a interacts with phosphatidylinositol 3-kinase and negatively regulates autophagy induced by lipopolysaccharide stimulation in macrophages.</title>
        <authorList>
            <person name="Seto S."/>
            <person name="Sugaya K."/>
            <person name="Tsujimura K."/>
            <person name="Nagata T."/>
            <person name="Horii T."/>
            <person name="Koide Y."/>
        </authorList>
    </citation>
    <scope>SUBCELLULAR LOCATION</scope>
</reference>
<reference key="7">
    <citation type="journal article" date="2015" name="Nat. Commun.">
        <title>The intellectual disability protein RAB39B selectively regulates GluA2 trafficking to determine synaptic AMPAR composition.</title>
        <authorList>
            <person name="Mignogna M.L."/>
            <person name="Giannandrea M."/>
            <person name="Gurgone A."/>
            <person name="Fanelli F."/>
            <person name="Raimondi F."/>
            <person name="Mapelli L."/>
            <person name="Bassani S."/>
            <person name="Fang H."/>
            <person name="Van Anken E."/>
            <person name="Alessio M."/>
            <person name="Passafaro M."/>
            <person name="Gatti S."/>
            <person name="Esteban J.A."/>
            <person name="Huganir R."/>
            <person name="D'Adamo P."/>
        </authorList>
    </citation>
    <scope>INTERACTION WITH PICK1</scope>
</reference>
<reference key="8">
    <citation type="journal article" date="2014" name="Am. J. Hum. Genet.">
        <title>Mutations in RAB39B cause X-linked intellectual disability and early-onset Parkinson disease with alpha-synuclein pathology.</title>
        <authorList>
            <person name="Wilson G.R."/>
            <person name="Sim J.C."/>
            <person name="McLean C."/>
            <person name="Giannandrea M."/>
            <person name="Galea C.A."/>
            <person name="Riseley J.R."/>
            <person name="Stephenson S.E."/>
            <person name="Fitzpatrick E."/>
            <person name="Haas S.A."/>
            <person name="Pope K."/>
            <person name="Hogan K.J."/>
            <person name="Gregg R.G."/>
            <person name="Bromhead C.J."/>
            <person name="Wargowski D.S."/>
            <person name="Lawrence C.H."/>
            <person name="James P.A."/>
            <person name="Churchyard A."/>
            <person name="Gao Y."/>
            <person name="Phelan D.G."/>
            <person name="Gillies G."/>
            <person name="Salce N."/>
            <person name="Stanford L."/>
            <person name="Marsh A.P."/>
            <person name="Mignogna M.L."/>
            <person name="Hayflick S.J."/>
            <person name="Leventer R.J."/>
            <person name="Delatycki M.B."/>
            <person name="Mellick G.D."/>
            <person name="Kalscheuer V.M."/>
            <person name="D'Adamo P."/>
            <person name="Bahlo M."/>
            <person name="Amor D.J."/>
            <person name="Lockhart P.J."/>
        </authorList>
    </citation>
    <scope>INVOLVEMENT IN WSMN</scope>
    <scope>VARIANT WSMN LYS-168</scope>
    <scope>CHARACTERIZATION OF VARIANT WSMN LYS-168</scope>
</reference>
<reference key="9">
    <citation type="journal article" date="2016" name="EMBO J.">
        <title>Loss of C9ORF72 impairs autophagy and synergizes with polyQ Ataxin-2 to induce motor neuron dysfunction and cell death.</title>
        <authorList>
            <person name="Sellier C."/>
            <person name="Campanari M.L."/>
            <person name="Julie Corbier C."/>
            <person name="Gaucherot A."/>
            <person name="Kolb-Cheynel I."/>
            <person name="Oulad-Abdelghani M."/>
            <person name="Ruffenach F."/>
            <person name="Page A."/>
            <person name="Ciura S."/>
            <person name="Kabashi E."/>
            <person name="Charlet-Berguerand N."/>
        </authorList>
    </citation>
    <scope>FUNCTION</scope>
    <scope>MUTAGENESIS OF SER-22 AND GLN-68</scope>
    <scope>ACTIVITY REGULATION</scope>
</reference>
<reference key="10">
    <citation type="journal article" date="2016" name="Neurobiol. Aging">
        <title>RAB39B gene mutations are not a common cause of Parkinson's disease or dementia with Lewy bodies.</title>
        <authorList>
            <person name="Hodges K."/>
            <person name="Brewer S.S."/>
            <person name="Labbe C."/>
            <person name="Soto-Ortolaza A.I."/>
            <person name="Walton R.L."/>
            <person name="Strongosky A.J."/>
            <person name="Uitti R.J."/>
            <person name="van Gerpen J.A."/>
            <person name="Ertekin-Taner N."/>
            <person name="Kantarci K."/>
            <person name="Lowe V.J."/>
            <person name="Parisi J.E."/>
            <person name="Savica R."/>
            <person name="Graff-Radford J."/>
            <person name="Jones D.T."/>
            <person name="Knopman D.S."/>
            <person name="Petersen R.C."/>
            <person name="Murray M.E."/>
            <person name="Graff-Radford N.R."/>
            <person name="Ferman T.J."/>
            <person name="Dickson D.W."/>
            <person name="Wszolek Z.K."/>
            <person name="Boeve B.F."/>
            <person name="Ross O.A."/>
            <person name="Lorenzo-Betancor O."/>
        </authorList>
    </citation>
    <scope>DISCUSSION ON INVOLVEMENT IN WSMN</scope>
</reference>
<reference key="11">
    <citation type="journal article" date="2016" name="Parkinsonism Relat. Disord.">
        <title>RAB39B mutations are a rare finding in Parkinson disease patients.</title>
        <authorList>
            <person name="Loechte T."/>
            <person name="Brueggemann N."/>
            <person name="Vollstedt E.J."/>
            <person name="Krause P."/>
            <person name="Domingo A."/>
            <person name="Rosales R."/>
            <person name="Lee L.V."/>
            <person name="Hopfner F."/>
            <person name="Westenberger A."/>
            <person name="Kuehn A."/>
            <person name="Klein C."/>
            <person name="Lohmann K."/>
        </authorList>
    </citation>
    <scope>DISCUSSION ON INVOLVEMENT IN WSMN</scope>
</reference>
<reference key="12">
    <citation type="journal article" date="2023" name="Nat. Commun.">
        <title>C9orf72-catalyzed GTP loading of Rab39A enables HOPS-mediated membrane tethering and fusion in mammalian autophagy.</title>
        <authorList>
            <person name="Zhang S."/>
            <person name="Tong M."/>
            <person name="Zheng D."/>
            <person name="Huang H."/>
            <person name="Li L."/>
            <person name="Ungermann C."/>
            <person name="Pan Y."/>
            <person name="Luo H."/>
            <person name="Lei M."/>
            <person name="Tang Z."/>
            <person name="Fu W."/>
            <person name="Chen S."/>
            <person name="Liu X."/>
            <person name="Zhong Q."/>
        </authorList>
    </citation>
    <scope>FUNCTION</scope>
    <scope>INTERACTION WITH 9ORF72; VPS39 AND VPS41</scope>
    <scope>SUBCELLULAR LOCATION</scope>
</reference>
<reference evidence="19" key="13">
    <citation type="submission" date="2019-07" db="PDB data bank">
        <title>Structure of the human RAB39B in complex with GMPPNP.</title>
        <authorList>
            <person name="Diaz-Saez L."/>
            <person name="Jung S."/>
            <person name="Huber K."/>
            <person name="von Delft F."/>
            <person name="Arrowsmith C.H."/>
            <person name="Edwards A."/>
            <person name="Bountra C."/>
        </authorList>
    </citation>
    <scope>X-RAY CRYSTALLOGRAPHY (1.70 ANGSTROMS) OF 1-207 IN COMPLEX WITH MG(2+) AND GTP ANALOG</scope>
    <scope>COFACTOR</scope>
    <scope>DOMAIN</scope>
</reference>
<reference key="14">
    <citation type="journal article" date="2015" name="Mol. Neurodegener.">
        <title>The RAB39B p.G192R mutation causes X-linked dominant Parkinson's disease.</title>
        <authorList>
            <person name="Mata I.F."/>
            <person name="Jang Y."/>
            <person name="Kim C.H."/>
            <person name="Hanna D.S."/>
            <person name="Dorschner M.O."/>
            <person name="Samii A."/>
            <person name="Agarwal P."/>
            <person name="Roberts J.W."/>
            <person name="Klepitskaya O."/>
            <person name="Shprecher D.R."/>
            <person name="Chung K.A."/>
            <person name="Factor S.A."/>
            <person name="Espay A.J."/>
            <person name="Revilla F.J."/>
            <person name="Higgins D.S."/>
            <person name="Litvan I."/>
            <person name="Leverenz J.B."/>
            <person name="Yearout D."/>
            <person name="Inca-Martinez M."/>
            <person name="Martinez E."/>
            <person name="Thompson T.R."/>
            <person name="Cholerton B.A."/>
            <person name="Hu S.C."/>
            <person name="Edwards K.L."/>
            <person name="Kim K.S."/>
            <person name="Zabetian C.P."/>
        </authorList>
    </citation>
    <scope>VARIANT WSMN ARG-192</scope>
    <scope>SUBCELLULAR LOCATION</scope>
</reference>
<reference key="15">
    <citation type="journal article" date="2015" name="Neurol. Genet.">
        <title>Loss-of-function mutations in RAB39B are associated with typical early-onset Parkinson disease.</title>
        <authorList>
            <consortium name="French Parkinson's Disease Genetics Study Group (PDG) and the International Parkinson's Disease Genomics Consortium (IPDGC)"/>
            <person name="Lesage S."/>
            <person name="Bras J."/>
            <person name="Cormier-Dequaire F."/>
            <person name="Condroyer C."/>
            <person name="Nicolas A."/>
            <person name="Darwent L."/>
            <person name="Guerreiro R."/>
            <person name="Majounie E."/>
            <person name="Federoff M."/>
            <person name="Heutink P."/>
            <person name="Wood N.W."/>
            <person name="Gasser T."/>
            <person name="Hardy J."/>
            <person name="Tison F."/>
            <person name="Singleton A."/>
            <person name="Brice A."/>
        </authorList>
    </citation>
    <scope>VARIANT WSMN 186-TRP--CYS-213 DEL</scope>
</reference>
<dbReference type="EC" id="3.6.5.2" evidence="2"/>
<dbReference type="EMBL" id="AY052478">
    <property type="protein sequence ID" value="AAL12244.1"/>
    <property type="molecule type" value="mRNA"/>
</dbReference>
<dbReference type="EMBL" id="AL834460">
    <property type="protein sequence ID" value="CAD39120.1"/>
    <property type="molecule type" value="mRNA"/>
</dbReference>
<dbReference type="EMBL" id="AL356738">
    <property type="protein sequence ID" value="CAI41468.1"/>
    <property type="molecule type" value="Genomic_DNA"/>
</dbReference>
<dbReference type="EMBL" id="BC009714">
    <property type="protein sequence ID" value="AAH09714.1"/>
    <property type="molecule type" value="mRNA"/>
</dbReference>
<dbReference type="CCDS" id="CCDS14766.1"/>
<dbReference type="RefSeq" id="NP_741995.1">
    <property type="nucleotide sequence ID" value="NM_171998.4"/>
</dbReference>
<dbReference type="PDB" id="6S5F">
    <property type="method" value="X-ray"/>
    <property type="resolution" value="1.70 A"/>
    <property type="chains" value="A=1-207"/>
</dbReference>
<dbReference type="PDBsum" id="6S5F"/>
<dbReference type="SMR" id="Q96DA2"/>
<dbReference type="BioGRID" id="125507">
    <property type="interactions" value="54"/>
</dbReference>
<dbReference type="FunCoup" id="Q96DA2">
    <property type="interactions" value="1325"/>
</dbReference>
<dbReference type="IntAct" id="Q96DA2">
    <property type="interactions" value="51"/>
</dbReference>
<dbReference type="MINT" id="Q96DA2"/>
<dbReference type="STRING" id="9606.ENSP00000358466"/>
<dbReference type="iPTMnet" id="Q96DA2"/>
<dbReference type="PhosphoSitePlus" id="Q96DA2"/>
<dbReference type="BioMuta" id="RAB39B"/>
<dbReference type="DMDM" id="27734447"/>
<dbReference type="jPOST" id="Q96DA2"/>
<dbReference type="MassIVE" id="Q96DA2"/>
<dbReference type="PaxDb" id="9606-ENSP00000358466"/>
<dbReference type="PeptideAtlas" id="Q96DA2"/>
<dbReference type="ProteomicsDB" id="76264"/>
<dbReference type="Pumba" id="Q96DA2"/>
<dbReference type="Antibodypedia" id="350">
    <property type="antibodies" value="188 antibodies from 28 providers"/>
</dbReference>
<dbReference type="DNASU" id="116442"/>
<dbReference type="Ensembl" id="ENST00000369454.4">
    <property type="protein sequence ID" value="ENSP00000358466.3"/>
    <property type="gene ID" value="ENSG00000155961.5"/>
</dbReference>
<dbReference type="GeneID" id="116442"/>
<dbReference type="KEGG" id="hsa:116442"/>
<dbReference type="MANE-Select" id="ENST00000369454.4">
    <property type="protein sequence ID" value="ENSP00000358466.3"/>
    <property type="RefSeq nucleotide sequence ID" value="NM_171998.4"/>
    <property type="RefSeq protein sequence ID" value="NP_741995.1"/>
</dbReference>
<dbReference type="UCSC" id="uc004fne.5">
    <property type="organism name" value="human"/>
</dbReference>
<dbReference type="AGR" id="HGNC:16499"/>
<dbReference type="CTD" id="116442"/>
<dbReference type="DisGeNET" id="116442"/>
<dbReference type="GeneCards" id="RAB39B"/>
<dbReference type="GeneReviews" id="RAB39B"/>
<dbReference type="HGNC" id="HGNC:16499">
    <property type="gene designation" value="RAB39B"/>
</dbReference>
<dbReference type="HPA" id="ENSG00000155961">
    <property type="expression patterns" value="Tissue enhanced (brain, retina)"/>
</dbReference>
<dbReference type="MalaCards" id="RAB39B"/>
<dbReference type="MIM" id="300271">
    <property type="type" value="phenotype"/>
</dbReference>
<dbReference type="MIM" id="300774">
    <property type="type" value="gene"/>
</dbReference>
<dbReference type="MIM" id="311510">
    <property type="type" value="phenotype"/>
</dbReference>
<dbReference type="neXtProt" id="NX_Q96DA2"/>
<dbReference type="OpenTargets" id="ENSG00000155961"/>
<dbReference type="Orphanet" id="2379">
    <property type="disease" value="Early-onset parkinsonism-intellectual disability syndrome"/>
</dbReference>
<dbReference type="Orphanet" id="777">
    <property type="disease" value="X-linked non-syndromic intellectual disability"/>
</dbReference>
<dbReference type="PharmGKB" id="PA34131"/>
<dbReference type="VEuPathDB" id="HostDB:ENSG00000155961"/>
<dbReference type="eggNOG" id="KOG0091">
    <property type="taxonomic scope" value="Eukaryota"/>
</dbReference>
<dbReference type="GeneTree" id="ENSGT00940000158132"/>
<dbReference type="HOGENOM" id="CLU_041217_23_1_1"/>
<dbReference type="InParanoid" id="Q96DA2"/>
<dbReference type="OMA" id="XSITRAY"/>
<dbReference type="OrthoDB" id="9989112at2759"/>
<dbReference type="PAN-GO" id="Q96DA2">
    <property type="GO annotations" value="6 GO annotations based on evolutionary models"/>
</dbReference>
<dbReference type="PhylomeDB" id="Q96DA2"/>
<dbReference type="TreeFam" id="TF300032"/>
<dbReference type="PathwayCommons" id="Q96DA2"/>
<dbReference type="Reactome" id="R-HSA-8873719">
    <property type="pathway name" value="RAB geranylgeranylation"/>
</dbReference>
<dbReference type="Reactome" id="R-HSA-8876198">
    <property type="pathway name" value="RAB GEFs exchange GTP for GDP on RABs"/>
</dbReference>
<dbReference type="SignaLink" id="Q96DA2"/>
<dbReference type="SIGNOR" id="Q96DA2"/>
<dbReference type="BioGRID-ORCS" id="116442">
    <property type="hits" value="12 hits in 769 CRISPR screens"/>
</dbReference>
<dbReference type="GeneWiki" id="RAB39B"/>
<dbReference type="GenomeRNAi" id="116442"/>
<dbReference type="Pharos" id="Q96DA2">
    <property type="development level" value="Tbio"/>
</dbReference>
<dbReference type="PRO" id="PR:Q96DA2"/>
<dbReference type="Proteomes" id="UP000005640">
    <property type="component" value="Chromosome X"/>
</dbReference>
<dbReference type="RNAct" id="Q96DA2">
    <property type="molecule type" value="protein"/>
</dbReference>
<dbReference type="Bgee" id="ENSG00000155961">
    <property type="expression patterns" value="Expressed in endothelial cell and 123 other cell types or tissues"/>
</dbReference>
<dbReference type="GO" id="GO:0030659">
    <property type="term" value="C:cytoplasmic vesicle membrane"/>
    <property type="evidence" value="ECO:0007669"/>
    <property type="project" value="UniProtKB-SubCell"/>
</dbReference>
<dbReference type="GO" id="GO:0005794">
    <property type="term" value="C:Golgi apparatus"/>
    <property type="evidence" value="ECO:0000314"/>
    <property type="project" value="UniProtKB"/>
</dbReference>
<dbReference type="GO" id="GO:0043005">
    <property type="term" value="C:neuron projection"/>
    <property type="evidence" value="ECO:0000314"/>
    <property type="project" value="UniProtKB"/>
</dbReference>
<dbReference type="GO" id="GO:0005886">
    <property type="term" value="C:plasma membrane"/>
    <property type="evidence" value="ECO:0007669"/>
    <property type="project" value="UniProtKB-SubCell"/>
</dbReference>
<dbReference type="GO" id="GO:0031982">
    <property type="term" value="C:vesicle"/>
    <property type="evidence" value="ECO:0000314"/>
    <property type="project" value="UniProtKB"/>
</dbReference>
<dbReference type="GO" id="GO:0005525">
    <property type="term" value="F:GTP binding"/>
    <property type="evidence" value="ECO:0000318"/>
    <property type="project" value="GO_Central"/>
</dbReference>
<dbReference type="GO" id="GO:0003924">
    <property type="term" value="F:GTPase activity"/>
    <property type="evidence" value="ECO:0000318"/>
    <property type="project" value="GO_Central"/>
</dbReference>
<dbReference type="GO" id="GO:0031489">
    <property type="term" value="F:myosin V binding"/>
    <property type="evidence" value="ECO:0000353"/>
    <property type="project" value="UniProtKB"/>
</dbReference>
<dbReference type="GO" id="GO:0006914">
    <property type="term" value="P:autophagy"/>
    <property type="evidence" value="ECO:0007669"/>
    <property type="project" value="UniProtKB-KW"/>
</dbReference>
<dbReference type="GO" id="GO:0015031">
    <property type="term" value="P:protein transport"/>
    <property type="evidence" value="ECO:0007669"/>
    <property type="project" value="UniProtKB-KW"/>
</dbReference>
<dbReference type="GO" id="GO:0032482">
    <property type="term" value="P:Rab protein signal transduction"/>
    <property type="evidence" value="ECO:0007669"/>
    <property type="project" value="InterPro"/>
</dbReference>
<dbReference type="GO" id="GO:0010506">
    <property type="term" value="P:regulation of autophagy"/>
    <property type="evidence" value="ECO:0000315"/>
    <property type="project" value="UniProtKB"/>
</dbReference>
<dbReference type="GO" id="GO:0050808">
    <property type="term" value="P:synapse organization"/>
    <property type="evidence" value="ECO:0000250"/>
    <property type="project" value="UniProtKB"/>
</dbReference>
<dbReference type="GO" id="GO:0016192">
    <property type="term" value="P:vesicle-mediated transport"/>
    <property type="evidence" value="ECO:0000250"/>
    <property type="project" value="UniProtKB"/>
</dbReference>
<dbReference type="CDD" id="cd04111">
    <property type="entry name" value="Rab39"/>
    <property type="match status" value="1"/>
</dbReference>
<dbReference type="FunFam" id="3.40.50.300:FF:000358">
    <property type="entry name" value="RAB39B, member RAS oncogene family"/>
    <property type="match status" value="1"/>
</dbReference>
<dbReference type="Gene3D" id="3.40.50.300">
    <property type="entry name" value="P-loop containing nucleotide triphosphate hydrolases"/>
    <property type="match status" value="1"/>
</dbReference>
<dbReference type="InterPro" id="IPR027417">
    <property type="entry name" value="P-loop_NTPase"/>
</dbReference>
<dbReference type="InterPro" id="IPR041818">
    <property type="entry name" value="Rab39"/>
</dbReference>
<dbReference type="InterPro" id="IPR050209">
    <property type="entry name" value="Rab_GTPases_membrane_traffic"/>
</dbReference>
<dbReference type="InterPro" id="IPR005225">
    <property type="entry name" value="Small_GTP-bd"/>
</dbReference>
<dbReference type="InterPro" id="IPR001806">
    <property type="entry name" value="Small_GTPase"/>
</dbReference>
<dbReference type="NCBIfam" id="TIGR00231">
    <property type="entry name" value="small_GTP"/>
    <property type="match status" value="1"/>
</dbReference>
<dbReference type="PANTHER" id="PTHR47979">
    <property type="entry name" value="DRAB11-RELATED"/>
    <property type="match status" value="1"/>
</dbReference>
<dbReference type="Pfam" id="PF00071">
    <property type="entry name" value="Ras"/>
    <property type="match status" value="1"/>
</dbReference>
<dbReference type="PRINTS" id="PR00449">
    <property type="entry name" value="RASTRNSFRMNG"/>
</dbReference>
<dbReference type="SMART" id="SM00175">
    <property type="entry name" value="RAB"/>
    <property type="match status" value="1"/>
</dbReference>
<dbReference type="SMART" id="SM00176">
    <property type="entry name" value="RAN"/>
    <property type="match status" value="1"/>
</dbReference>
<dbReference type="SMART" id="SM00173">
    <property type="entry name" value="RAS"/>
    <property type="match status" value="1"/>
</dbReference>
<dbReference type="SMART" id="SM00174">
    <property type="entry name" value="RHO"/>
    <property type="match status" value="1"/>
</dbReference>
<dbReference type="SUPFAM" id="SSF52540">
    <property type="entry name" value="P-loop containing nucleoside triphosphate hydrolases"/>
    <property type="match status" value="1"/>
</dbReference>
<dbReference type="PROSITE" id="PS51419">
    <property type="entry name" value="RAB"/>
    <property type="match status" value="1"/>
</dbReference>
<organism>
    <name type="scientific">Homo sapiens</name>
    <name type="common">Human</name>
    <dbReference type="NCBI Taxonomy" id="9606"/>
    <lineage>
        <taxon>Eukaryota</taxon>
        <taxon>Metazoa</taxon>
        <taxon>Chordata</taxon>
        <taxon>Craniata</taxon>
        <taxon>Vertebrata</taxon>
        <taxon>Euteleostomi</taxon>
        <taxon>Mammalia</taxon>
        <taxon>Eutheria</taxon>
        <taxon>Euarchontoglires</taxon>
        <taxon>Primates</taxon>
        <taxon>Haplorrhini</taxon>
        <taxon>Catarrhini</taxon>
        <taxon>Hominidae</taxon>
        <taxon>Homo</taxon>
    </lineage>
</organism>
<feature type="chain" id="PRO_0000121255" description="Ras-related protein Rab-39B">
    <location>
        <begin position="1"/>
        <end position="213"/>
    </location>
</feature>
<feature type="region of interest" description="Switch-I" evidence="4">
    <location>
        <begin position="35"/>
        <end position="43"/>
    </location>
</feature>
<feature type="region of interest" description="Switch-II" evidence="4">
    <location>
        <begin position="67"/>
        <end position="83"/>
    </location>
</feature>
<feature type="binding site" evidence="17 19">
    <location>
        <position position="17"/>
    </location>
    <ligand>
        <name>GTP</name>
        <dbReference type="ChEBI" id="CHEBI:37565"/>
    </ligand>
</feature>
<feature type="binding site" evidence="17 19">
    <location>
        <position position="20"/>
    </location>
    <ligand>
        <name>GTP</name>
        <dbReference type="ChEBI" id="CHEBI:37565"/>
    </ligand>
</feature>
<feature type="binding site" evidence="17 19">
    <location>
        <position position="21"/>
    </location>
    <ligand>
        <name>GTP</name>
        <dbReference type="ChEBI" id="CHEBI:37565"/>
    </ligand>
</feature>
<feature type="binding site" evidence="17 19">
    <location>
        <position position="22"/>
    </location>
    <ligand>
        <name>GTP</name>
        <dbReference type="ChEBI" id="CHEBI:37565"/>
    </ligand>
</feature>
<feature type="binding site" evidence="15 19">
    <location>
        <position position="22"/>
    </location>
    <ligand>
        <name>Mg(2+)</name>
        <dbReference type="ChEBI" id="CHEBI:18420"/>
    </ligand>
</feature>
<feature type="binding site" evidence="17 19">
    <location>
        <position position="23"/>
    </location>
    <ligand>
        <name>GTP</name>
        <dbReference type="ChEBI" id="CHEBI:37565"/>
    </ligand>
</feature>
<feature type="binding site" evidence="17 19">
    <location>
        <position position="37"/>
    </location>
    <ligand>
        <name>GTP</name>
        <dbReference type="ChEBI" id="CHEBI:37565"/>
    </ligand>
</feature>
<feature type="binding site" evidence="17 19">
    <location>
        <position position="40"/>
    </location>
    <ligand>
        <name>GTP</name>
        <dbReference type="ChEBI" id="CHEBI:37565"/>
    </ligand>
</feature>
<feature type="binding site" evidence="15 19">
    <location>
        <position position="40"/>
    </location>
    <ligand>
        <name>Mg(2+)</name>
        <dbReference type="ChEBI" id="CHEBI:18420"/>
    </ligand>
</feature>
<feature type="binding site" evidence="2 15">
    <location>
        <position position="64"/>
    </location>
    <ligand>
        <name>Mg(2+)</name>
        <dbReference type="ChEBI" id="CHEBI:18420"/>
    </ligand>
</feature>
<feature type="binding site" evidence="17 19">
    <location>
        <position position="67"/>
    </location>
    <ligand>
        <name>GTP</name>
        <dbReference type="ChEBI" id="CHEBI:37565"/>
    </ligand>
</feature>
<feature type="binding site" evidence="17 19">
    <location>
        <position position="123"/>
    </location>
    <ligand>
        <name>GTP</name>
        <dbReference type="ChEBI" id="CHEBI:37565"/>
    </ligand>
</feature>
<feature type="binding site" evidence="17 19">
    <location>
        <position position="124"/>
    </location>
    <ligand>
        <name>GTP</name>
        <dbReference type="ChEBI" id="CHEBI:37565"/>
    </ligand>
</feature>
<feature type="binding site" evidence="17 19">
    <location>
        <position position="126"/>
    </location>
    <ligand>
        <name>GTP</name>
        <dbReference type="ChEBI" id="CHEBI:37565"/>
    </ligand>
</feature>
<feature type="binding site" evidence="17 19">
    <location>
        <position position="154"/>
    </location>
    <ligand>
        <name>GTP</name>
        <dbReference type="ChEBI" id="CHEBI:37565"/>
    </ligand>
</feature>
<feature type="binding site" evidence="17 19">
    <location>
        <position position="155"/>
    </location>
    <ligand>
        <name>GTP</name>
        <dbReference type="ChEBI" id="CHEBI:37565"/>
    </ligand>
</feature>
<feature type="modified residue" description="Phosphoserine" evidence="3">
    <location>
        <position position="201"/>
    </location>
</feature>
<feature type="modified residue" description="Cysteine methyl ester" evidence="1">
    <location>
        <position position="213"/>
    </location>
</feature>
<feature type="lipid moiety-binding region" description="S-geranylgeranyl cysteine" evidence="1">
    <location>
        <position position="211"/>
    </location>
</feature>
<feature type="lipid moiety-binding region" description="S-geranylgeranyl cysteine" evidence="1">
    <location>
        <position position="213"/>
    </location>
</feature>
<feature type="sequence variant" id="VAR_073264" description="In WSMN; loss of function mutation; expression of the mutation in neuroblastoma cells results in low levels of the mutant protein; dbSNP:rs587777874." evidence="7">
    <original>T</original>
    <variation>K</variation>
    <location>
        <position position="168"/>
    </location>
</feature>
<feature type="sequence variant" id="VAR_078514" description="In WSMN." evidence="11">
    <location>
        <begin position="186"/>
        <end position="213"/>
    </location>
</feature>
<feature type="sequence variant" id="VAR_078515" description="In WSMN; impaired localization to cytoplasmic vesicles; dbSNP:rs864309527." evidence="9">
    <original>G</original>
    <variation>R</variation>
    <location>
        <position position="192"/>
    </location>
</feature>
<feature type="mutagenesis site" description="Dominant negative mutant." evidence="12">
    <original>S</original>
    <variation>N</variation>
    <location>
        <position position="22"/>
    </location>
</feature>
<feature type="mutagenesis site" description="Constitutively active mutant locked in the active GTP-bound form." evidence="12">
    <original>Q</original>
    <variation>L</variation>
    <location>
        <position position="68"/>
    </location>
</feature>
<feature type="sequence conflict" description="In Ref. 1; AAL12244." evidence="16" ref="1">
    <original>R</original>
    <variation>T</variation>
    <location>
        <position position="57"/>
    </location>
</feature>
<feature type="strand" evidence="20">
    <location>
        <begin position="6"/>
        <end position="14"/>
    </location>
</feature>
<feature type="helix" evidence="20">
    <location>
        <begin position="21"/>
        <end position="30"/>
    </location>
</feature>
<feature type="strand" evidence="20">
    <location>
        <begin position="42"/>
        <end position="53"/>
    </location>
</feature>
<feature type="strand" evidence="20">
    <location>
        <begin position="56"/>
        <end position="65"/>
    </location>
</feature>
<feature type="helix" evidence="20">
    <location>
        <begin position="69"/>
        <end position="71"/>
    </location>
</feature>
<feature type="helix" evidence="20">
    <location>
        <begin position="72"/>
        <end position="76"/>
    </location>
</feature>
<feature type="strand" evidence="20">
    <location>
        <begin position="83"/>
        <end position="90"/>
    </location>
</feature>
<feature type="helix" evidence="20">
    <location>
        <begin position="94"/>
        <end position="98"/>
    </location>
</feature>
<feature type="helix" evidence="20">
    <location>
        <begin position="100"/>
        <end position="107"/>
    </location>
</feature>
<feature type="strand" evidence="20">
    <location>
        <begin position="112"/>
        <end position="114"/>
    </location>
</feature>
<feature type="strand" evidence="20">
    <location>
        <begin position="117"/>
        <end position="123"/>
    </location>
</feature>
<feature type="helix" evidence="20">
    <location>
        <begin position="128"/>
        <end position="130"/>
    </location>
</feature>
<feature type="helix" evidence="20">
    <location>
        <begin position="135"/>
        <end position="144"/>
    </location>
</feature>
<feature type="strand" evidence="20">
    <location>
        <begin position="149"/>
        <end position="153"/>
    </location>
</feature>
<feature type="turn" evidence="20">
    <location>
        <begin position="154"/>
        <end position="157"/>
    </location>
</feature>
<feature type="helix" evidence="20">
    <location>
        <begin position="160"/>
        <end position="176"/>
    </location>
</feature>
<feature type="strand" evidence="20">
    <location>
        <begin position="188"/>
        <end position="191"/>
    </location>
</feature>
<sequence length="213" mass="24622">MEAIWLYQFRLIVIGDSTVGKSCLIRRFTEGRFAQVSDPTVGVDFFSRLVEIEPGKRIKLQIWDTAGQERFRSITRAYYRNSVGGLLLFDITNRRSFQNVHEWLEETKVHVQPYQIVFVLVGHKCDLDTQRQVTRHEAEKLAAAYGMKYIETSARDAINVEKAFTDLTRDIYELVKRGEITIQEGWEGVKSGFVPNVVHSSEEVVKSERRCLC</sequence>
<keyword id="KW-0002">3D-structure</keyword>
<keyword id="KW-1268">Autism spectrum disorder</keyword>
<keyword id="KW-0072">Autophagy</keyword>
<keyword id="KW-1003">Cell membrane</keyword>
<keyword id="KW-0968">Cytoplasmic vesicle</keyword>
<keyword id="KW-0225">Disease variant</keyword>
<keyword id="KW-0333">Golgi apparatus</keyword>
<keyword id="KW-0342">GTP-binding</keyword>
<keyword id="KW-0378">Hydrolase</keyword>
<keyword id="KW-0991">Intellectual disability</keyword>
<keyword id="KW-0449">Lipoprotein</keyword>
<keyword id="KW-0458">Lysosome</keyword>
<keyword id="KW-0460">Magnesium</keyword>
<keyword id="KW-0472">Membrane</keyword>
<keyword id="KW-0479">Metal-binding</keyword>
<keyword id="KW-0488">Methylation</keyword>
<keyword id="KW-0547">Nucleotide-binding</keyword>
<keyword id="KW-0907">Parkinson disease</keyword>
<keyword id="KW-0597">Phosphoprotein</keyword>
<keyword id="KW-0636">Prenylation</keyword>
<keyword id="KW-0653">Protein transport</keyword>
<keyword id="KW-1267">Proteomics identification</keyword>
<keyword id="KW-1185">Reference proteome</keyword>
<keyword id="KW-0813">Transport</keyword>
<accession>Q96DA2</accession>
<accession>Q5JT79</accession>
<accession>Q8NEX3</accession>
<comment type="function">
    <text evidence="3 12 14">The small GTPases Rab are key regulators of intracellular membrane trafficking, from the formation of transport vesicles to their fusion with membranes. Rabs cycle between an inactive GDP-bound form and an active GTP-bound form that is able to recruit to membranes different sets of downstream effectors directly responsible for vesicle formation, movement, tethering and fusion (PubMed:27103069). RAB39B is involved in autophagy and may function in autophagosome formation (PubMed:27103069, PubMed:37821429). Binds downstream effector PICK1 to ensure selectively GRIA2 exit from the endoplasmic reticulum to the Golgi and to regulate AMPAR composition at the post-synapses and thus synaptic transmission (By similarity). May regulate the homeostasis of SNCA/alpha-synuclein (By similarity).</text>
</comment>
<comment type="catalytic activity">
    <reaction evidence="2">
        <text>GTP + H2O = GDP + phosphate + H(+)</text>
        <dbReference type="Rhea" id="RHEA:19669"/>
        <dbReference type="ChEBI" id="CHEBI:15377"/>
        <dbReference type="ChEBI" id="CHEBI:15378"/>
        <dbReference type="ChEBI" id="CHEBI:37565"/>
        <dbReference type="ChEBI" id="CHEBI:43474"/>
        <dbReference type="ChEBI" id="CHEBI:58189"/>
        <dbReference type="EC" id="3.6.5.2"/>
    </reaction>
    <physiologicalReaction direction="left-to-right" evidence="2">
        <dbReference type="Rhea" id="RHEA:19670"/>
    </physiologicalReaction>
</comment>
<comment type="cofactor">
    <cofactor evidence="15">
        <name>Mg(2+)</name>
        <dbReference type="ChEBI" id="CHEBI:18420"/>
    </cofactor>
</comment>
<comment type="activity regulation">
    <text evidence="12 16">Regulated by guanine nucleotide exchange factors (GEFs) including C9orf72-SMCR8 complex, which promote the exchange of bound GDP for free GTP (PubMed:27103069). Regulated by GTPase activating proteins (GAPs) which increase the GTP hydrolysis activity (Probable). Inhibited by GDP dissociation inhibitors (GDIs) (Probable).</text>
</comment>
<comment type="subunit">
    <text evidence="3 8 14">Interacts (GDP-bound) with C9orf72; C9orf72 in complex with SMCR8 acts as a GEF for RAB39B (PubMed:37821429). Interacts (in GTP-bound form) with PICK1 (via PDZ domain); a PICK1 homodimer may allow simultaneous association of RAB39B and GRIA2 to PICK1 which is involved in GRIA2 trafficking (PubMed:25784538). Interacts with isoform c of RASSF1; the interaction is strong (By similarity). Interacts with isoform a of RASSF1; the interaction is weak (By similarity). Interacts with the DLG4/PSD-95 (By similarity). Interacts (GTP-bound) with HOPS complex components VPS39 and VPS41 (PubMed:37821429).</text>
</comment>
<comment type="interaction">
    <interactant intactId="EBI-9089467">
        <id>Q96DA2</id>
    </interactant>
    <interactant intactId="EBI-618309">
        <id>Q08379</id>
        <label>GOLGA2</label>
    </interactant>
    <organismsDiffer>false</organismsDiffer>
    <experiments>4</experiments>
</comment>
<comment type="interaction">
    <interactant intactId="EBI-9089467">
        <id>Q96DA2</id>
    </interactant>
    <interactant intactId="EBI-3941207">
        <id>Q96T51</id>
        <label>RUFY1</label>
    </interactant>
    <organismsDiffer>false</organismsDiffer>
    <experiments>4</experiments>
</comment>
<comment type="interaction">
    <interactant intactId="EBI-9089467">
        <id>Q96DA2</id>
    </interactant>
    <interactant intactId="EBI-7207091">
        <id>O14972</id>
        <label>VPS26C</label>
    </interactant>
    <organismsDiffer>false</organismsDiffer>
    <experiments>3</experiments>
</comment>
<comment type="interaction">
    <interactant intactId="EBI-9089467">
        <id>Q96DA2</id>
    </interactant>
    <interactant intactId="EBI-524753">
        <id>Q8IUH5</id>
        <label>ZDHHC17</label>
    </interactant>
    <organismsDiffer>false</organismsDiffer>
    <experiments>3</experiments>
</comment>
<comment type="subcellular location">
    <subcellularLocation>
        <location evidence="16">Cell membrane</location>
        <topology evidence="16">Lipid-anchor</topology>
        <orientation evidence="16">Cytoplasmic side</orientation>
    </subcellularLocation>
    <subcellularLocation>
        <location evidence="9">Cytoplasmic vesicle membrane</location>
        <topology evidence="16">Lipid-anchor</topology>
        <orientation evidence="16">Cytoplasmic side</orientation>
    </subcellularLocation>
    <subcellularLocation>
        <location evidence="5 6">Golgi apparatus</location>
    </subcellularLocation>
    <subcellularLocation>
        <location evidence="14">Cytoplasmic vesicle</location>
        <location evidence="14">Autophagosome membrane</location>
    </subcellularLocation>
    <subcellularLocation>
        <location evidence="14">Autolysosome membrane</location>
    </subcellularLocation>
    <text evidence="3 14">Partial colocalization with markers that cycle from the cell surface to the trans-Golgi network. Colocalized with STX17 in autolysosomes in autophagy-induced conditions, although less compared with RAB39A (PubMed:37821429).</text>
</comment>
<comment type="tissue specificity">
    <text evidence="5">Highly expressed in the brain.</text>
</comment>
<comment type="domain">
    <text evidence="15">Switch I, switch II and the interswitch regions are characteristic of Rab GTPases and mediate the interactions with Rab downstream effectors. The switch regions undergo conformational changes upon nucleotide binding which drive interaction with specific sets of effector proteins, with most effectors only binding to GTP-bound Rab.</text>
</comment>
<comment type="disease" evidence="5">
    <disease id="DI-02586">
        <name>Intellectual developmental disorder, X-linked 72</name>
        <acronym>XLID72</acronym>
        <description>A disorder characterized by significantly below average general intellectual functioning associated with impairments in adaptive behavior and manifested during the developmental period. Intellectual deficiency is the only primary symptom of non-syndromic X-linked forms, while syndromic forms present with associated physical, neurological and/or psychiatric manifestations. XLID72 patients can manifest autism spectrum disorder, seizures and macrocephaly as additional features.</description>
        <dbReference type="MIM" id="300271"/>
    </disease>
    <text>The disease is caused by variants affecting the gene represented in this entry.</text>
</comment>
<comment type="disease" evidence="7 9 11">
    <disease id="DI-04321">
        <name>Waisman syndrome</name>
        <acronym>WSMN</acronym>
        <description>A neurologic disorder characterized by delayed psychomotor development, intellectual disability, and early-onset Parkinson disease.</description>
        <dbReference type="MIM" id="311510"/>
    </disease>
    <text evidence="10 13">The disease is caused by variants affecting the gene represented in this entry. Its association with Parkinson disease is however unclear (PubMed:26739247, PubMed:27459931). According to a number of studies, variations affecting this gene are not a frequent cause of Parkinson disease, suggesting that RAB39B does not play a major role in Parkinson disease etiology (PubMed:26739247, PubMed:27459931).</text>
</comment>
<comment type="similarity">
    <text evidence="16">Belongs to the small GTPase superfamily. Rab family.</text>
</comment>